<name>YBC8_YEAST</name>
<gene>
    <name type="ordered locus">YBL028C</name>
    <name type="ORF">YBL0423</name>
</gene>
<sequence length="106" mass="12401">MAKSLRASSHLNAKSVKRRGVFQKAVDAREQRISDKLKEDLLKQKLEDLKKKEEQGIDMDVDEKKSNEEAPRKKISTSGWRDGRHHTYKKAKLMKQSKKKTSFTRF</sequence>
<proteinExistence type="evidence at protein level"/>
<accession>P38202</accession>
<accession>D6VPX2</accession>
<organism>
    <name type="scientific">Saccharomyces cerevisiae (strain ATCC 204508 / S288c)</name>
    <name type="common">Baker's yeast</name>
    <dbReference type="NCBI Taxonomy" id="559292"/>
    <lineage>
        <taxon>Eukaryota</taxon>
        <taxon>Fungi</taxon>
        <taxon>Dikarya</taxon>
        <taxon>Ascomycota</taxon>
        <taxon>Saccharomycotina</taxon>
        <taxon>Saccharomycetes</taxon>
        <taxon>Saccharomycetales</taxon>
        <taxon>Saccharomycetaceae</taxon>
        <taxon>Saccharomyces</taxon>
    </lineage>
</organism>
<feature type="chain" id="PRO_0000202462" description="UPF0642 protein YBL028C">
    <location>
        <begin position="1"/>
        <end position="106"/>
    </location>
</feature>
<feature type="region of interest" description="Disordered" evidence="1">
    <location>
        <begin position="1"/>
        <end position="21"/>
    </location>
</feature>
<feature type="region of interest" description="Disordered" evidence="1">
    <location>
        <begin position="52"/>
        <end position="106"/>
    </location>
</feature>
<feature type="compositionally biased region" description="Polar residues" evidence="1">
    <location>
        <begin position="1"/>
        <end position="12"/>
    </location>
</feature>
<feature type="compositionally biased region" description="Basic and acidic residues" evidence="1">
    <location>
        <begin position="62"/>
        <end position="72"/>
    </location>
</feature>
<feature type="compositionally biased region" description="Basic residues" evidence="1">
    <location>
        <begin position="83"/>
        <end position="106"/>
    </location>
</feature>
<comment type="miscellaneous">
    <text evidence="2">Present with 6210 molecules/cell in log phase SD medium.</text>
</comment>
<comment type="similarity">
    <text evidence="3">Belongs to the UPF0642 family.</text>
</comment>
<protein>
    <recommendedName>
        <fullName>UPF0642 protein YBL028C</fullName>
    </recommendedName>
</protein>
<keyword id="KW-0002">3D-structure</keyword>
<keyword id="KW-1185">Reference proteome</keyword>
<evidence type="ECO:0000256" key="1">
    <source>
        <dbReference type="SAM" id="MobiDB-lite"/>
    </source>
</evidence>
<evidence type="ECO:0000269" key="2">
    <source>
    </source>
</evidence>
<evidence type="ECO:0000305" key="3"/>
<dbReference type="EMBL" id="X77291">
    <property type="protein sequence ID" value="CAA54499.1"/>
    <property type="molecule type" value="Genomic_DNA"/>
</dbReference>
<dbReference type="EMBL" id="Z35789">
    <property type="protein sequence ID" value="CAA84847.1"/>
    <property type="molecule type" value="Genomic_DNA"/>
</dbReference>
<dbReference type="EMBL" id="AY558461">
    <property type="protein sequence ID" value="AAS56787.1"/>
    <property type="molecule type" value="Genomic_DNA"/>
</dbReference>
<dbReference type="EMBL" id="BK006936">
    <property type="protein sequence ID" value="DAA07092.1"/>
    <property type="molecule type" value="Genomic_DNA"/>
</dbReference>
<dbReference type="PIR" id="S45762">
    <property type="entry name" value="S45762"/>
</dbReference>
<dbReference type="RefSeq" id="NP_009525.1">
    <property type="nucleotide sequence ID" value="NM_001178268.1"/>
</dbReference>
<dbReference type="PDB" id="3JCT">
    <property type="method" value="EM"/>
    <property type="resolution" value="3.08 A"/>
    <property type="chains" value="z=1-106"/>
</dbReference>
<dbReference type="PDB" id="6ELZ">
    <property type="method" value="EM"/>
    <property type="resolution" value="3.30 A"/>
    <property type="chains" value="z=1-106"/>
</dbReference>
<dbReference type="PDB" id="6EM1">
    <property type="method" value="EM"/>
    <property type="resolution" value="3.60 A"/>
    <property type="chains" value="z=1-106"/>
</dbReference>
<dbReference type="PDB" id="6EM5">
    <property type="method" value="EM"/>
    <property type="resolution" value="4.30 A"/>
    <property type="chains" value="z=1-106"/>
</dbReference>
<dbReference type="PDB" id="6FT6">
    <property type="method" value="EM"/>
    <property type="resolution" value="3.90 A"/>
    <property type="chains" value="z=1-106"/>
</dbReference>
<dbReference type="PDB" id="6M62">
    <property type="method" value="EM"/>
    <property type="resolution" value="3.20 A"/>
    <property type="chains" value="z=1-106"/>
</dbReference>
<dbReference type="PDB" id="6N8J">
    <property type="method" value="EM"/>
    <property type="resolution" value="3.50 A"/>
    <property type="chains" value="z=1-106"/>
</dbReference>
<dbReference type="PDB" id="6N8K">
    <property type="method" value="EM"/>
    <property type="resolution" value="3.60 A"/>
    <property type="chains" value="z=1-106"/>
</dbReference>
<dbReference type="PDB" id="6N8L">
    <property type="method" value="EM"/>
    <property type="resolution" value="3.60 A"/>
    <property type="chains" value="z=1-106"/>
</dbReference>
<dbReference type="PDB" id="6YLG">
    <property type="method" value="EM"/>
    <property type="resolution" value="3.00 A"/>
    <property type="chains" value="z=1-106"/>
</dbReference>
<dbReference type="PDB" id="6YLH">
    <property type="method" value="EM"/>
    <property type="resolution" value="3.10 A"/>
    <property type="chains" value="z=1-106"/>
</dbReference>
<dbReference type="PDB" id="6YLX">
    <property type="method" value="EM"/>
    <property type="resolution" value="3.90 A"/>
    <property type="chains" value="z=1-106"/>
</dbReference>
<dbReference type="PDB" id="6YLY">
    <property type="method" value="EM"/>
    <property type="resolution" value="3.80 A"/>
    <property type="chains" value="z=1-106"/>
</dbReference>
<dbReference type="PDB" id="7BT6">
    <property type="method" value="EM"/>
    <property type="resolution" value="3.12 A"/>
    <property type="chains" value="z=1-106"/>
</dbReference>
<dbReference type="PDB" id="7BTB">
    <property type="method" value="EM"/>
    <property type="resolution" value="3.22 A"/>
    <property type="chains" value="z=1-106"/>
</dbReference>
<dbReference type="PDB" id="7NAC">
    <property type="method" value="EM"/>
    <property type="resolution" value="3.04 A"/>
    <property type="chains" value="z=1-106"/>
</dbReference>
<dbReference type="PDB" id="7NAF">
    <property type="method" value="EM"/>
    <property type="resolution" value="3.13 A"/>
    <property type="chains" value="z=2-7"/>
</dbReference>
<dbReference type="PDB" id="7OH3">
    <property type="method" value="EM"/>
    <property type="resolution" value="3.40 A"/>
    <property type="chains" value="z=1-106"/>
</dbReference>
<dbReference type="PDB" id="7OHQ">
    <property type="method" value="EM"/>
    <property type="resolution" value="3.10 A"/>
    <property type="chains" value="z=1-106"/>
</dbReference>
<dbReference type="PDB" id="7R7A">
    <property type="method" value="EM"/>
    <property type="resolution" value="3.04 A"/>
    <property type="chains" value="z=1-106"/>
</dbReference>
<dbReference type="PDB" id="7U0H">
    <property type="method" value="EM"/>
    <property type="resolution" value="2.76 A"/>
    <property type="chains" value="z=1-106"/>
</dbReference>
<dbReference type="PDB" id="7UG6">
    <property type="method" value="EM"/>
    <property type="resolution" value="2.90 A"/>
    <property type="chains" value="z=1-106"/>
</dbReference>
<dbReference type="PDB" id="7UOO">
    <property type="method" value="EM"/>
    <property type="resolution" value="2.34 A"/>
    <property type="chains" value="z=1-106"/>
</dbReference>
<dbReference type="PDB" id="7UQB">
    <property type="method" value="EM"/>
    <property type="resolution" value="2.43 A"/>
    <property type="chains" value="z=1-106"/>
</dbReference>
<dbReference type="PDB" id="7UQZ">
    <property type="method" value="EM"/>
    <property type="resolution" value="2.44 A"/>
    <property type="chains" value="z=2-106"/>
</dbReference>
<dbReference type="PDB" id="7V08">
    <property type="method" value="EM"/>
    <property type="resolution" value="2.36 A"/>
    <property type="chains" value="z=1-106"/>
</dbReference>
<dbReference type="PDB" id="7Z34">
    <property type="method" value="EM"/>
    <property type="resolution" value="3.80 A"/>
    <property type="chains" value="z=1-106"/>
</dbReference>
<dbReference type="PDB" id="8HFR">
    <property type="method" value="EM"/>
    <property type="resolution" value="2.64 A"/>
    <property type="chains" value="zp=1-106"/>
</dbReference>
<dbReference type="PDB" id="8V87">
    <property type="method" value="EM"/>
    <property type="resolution" value="2.66 A"/>
    <property type="chains" value="z=1-106"/>
</dbReference>
<dbReference type="PDBsum" id="3JCT"/>
<dbReference type="PDBsum" id="6ELZ"/>
<dbReference type="PDBsum" id="6EM1"/>
<dbReference type="PDBsum" id="6EM5"/>
<dbReference type="PDBsum" id="6FT6"/>
<dbReference type="PDBsum" id="6M62"/>
<dbReference type="PDBsum" id="6N8J"/>
<dbReference type="PDBsum" id="6N8K"/>
<dbReference type="PDBsum" id="6N8L"/>
<dbReference type="PDBsum" id="6YLG"/>
<dbReference type="PDBsum" id="6YLH"/>
<dbReference type="PDBsum" id="6YLX"/>
<dbReference type="PDBsum" id="6YLY"/>
<dbReference type="PDBsum" id="7BT6"/>
<dbReference type="PDBsum" id="7BTB"/>
<dbReference type="PDBsum" id="7NAC"/>
<dbReference type="PDBsum" id="7NAF"/>
<dbReference type="PDBsum" id="7OH3"/>
<dbReference type="PDBsum" id="7OHQ"/>
<dbReference type="PDBsum" id="7R7A"/>
<dbReference type="PDBsum" id="7U0H"/>
<dbReference type="PDBsum" id="7UG6"/>
<dbReference type="PDBsum" id="7UOO"/>
<dbReference type="PDBsum" id="7UQB"/>
<dbReference type="PDBsum" id="7UQZ"/>
<dbReference type="PDBsum" id="7V08"/>
<dbReference type="PDBsum" id="7Z34"/>
<dbReference type="PDBsum" id="8HFR"/>
<dbReference type="PDBsum" id="8V87"/>
<dbReference type="EMDB" id="EMD-0369"/>
<dbReference type="EMDB" id="EMD-0370"/>
<dbReference type="EMDB" id="EMD-0371"/>
<dbReference type="EMDB" id="EMD-10838"/>
<dbReference type="EMDB" id="EMD-10839"/>
<dbReference type="EMDB" id="EMD-10841"/>
<dbReference type="EMDB" id="EMD-10842"/>
<dbReference type="EMDB" id="EMD-12892"/>
<dbReference type="EMDB" id="EMD-12905"/>
<dbReference type="EMDB" id="EMD-14471"/>
<dbReference type="EMDB" id="EMD-24269"/>
<dbReference type="EMDB" id="EMD-24271"/>
<dbReference type="EMDB" id="EMD-24296"/>
<dbReference type="EMDB" id="EMD-26259"/>
<dbReference type="EMDB" id="EMD-26485"/>
<dbReference type="EMDB" id="EMD-26651"/>
<dbReference type="EMDB" id="EMD-26686"/>
<dbReference type="EMDB" id="EMD-26703"/>
<dbReference type="EMDB" id="EMD-26941"/>
<dbReference type="EMDB" id="EMD-30108"/>
<dbReference type="EMDB" id="EMD-30170"/>
<dbReference type="EMDB" id="EMD-30174"/>
<dbReference type="EMDB" id="EMD-34725"/>
<dbReference type="EMDB" id="EMD-4302"/>
<dbReference type="EMDB" id="EMD-43027"/>
<dbReference type="SMR" id="P38202"/>
<dbReference type="BioGRID" id="32670">
    <property type="interactions" value="94"/>
</dbReference>
<dbReference type="FunCoup" id="P38202">
    <property type="interactions" value="132"/>
</dbReference>
<dbReference type="IntAct" id="P38202">
    <property type="interactions" value="57"/>
</dbReference>
<dbReference type="MINT" id="P38202"/>
<dbReference type="STRING" id="4932.YBL028C"/>
<dbReference type="iPTMnet" id="P38202"/>
<dbReference type="PaxDb" id="4932-YBL028C"/>
<dbReference type="PeptideAtlas" id="P38202"/>
<dbReference type="EnsemblFungi" id="YBL028C_mRNA">
    <property type="protein sequence ID" value="YBL028C"/>
    <property type="gene ID" value="YBL028C"/>
</dbReference>
<dbReference type="GeneID" id="852253"/>
<dbReference type="KEGG" id="sce:YBL028C"/>
<dbReference type="AGR" id="SGD:S000000124"/>
<dbReference type="SGD" id="S000000124">
    <property type="gene designation" value="YBL028C"/>
</dbReference>
<dbReference type="VEuPathDB" id="FungiDB:YBL028C"/>
<dbReference type="eggNOG" id="ENOG502S5RC">
    <property type="taxonomic scope" value="Eukaryota"/>
</dbReference>
<dbReference type="HOGENOM" id="CLU_125052_1_0_1"/>
<dbReference type="InParanoid" id="P38202"/>
<dbReference type="OMA" id="GWRDARH"/>
<dbReference type="OrthoDB" id="4087970at2759"/>
<dbReference type="BioCyc" id="YEAST:G3O-28931-MONOMER"/>
<dbReference type="BioGRID-ORCS" id="852253">
    <property type="hits" value="7 hits in 10 CRISPR screens"/>
</dbReference>
<dbReference type="PRO" id="PR:P38202"/>
<dbReference type="Proteomes" id="UP000002311">
    <property type="component" value="Chromosome II"/>
</dbReference>
<dbReference type="RNAct" id="P38202">
    <property type="molecule type" value="protein"/>
</dbReference>
<dbReference type="GO" id="GO:0005730">
    <property type="term" value="C:nucleolus"/>
    <property type="evidence" value="ECO:0007005"/>
    <property type="project" value="SGD"/>
</dbReference>
<dbReference type="GO" id="GO:0005634">
    <property type="term" value="C:nucleus"/>
    <property type="evidence" value="ECO:0007005"/>
    <property type="project" value="SGD"/>
</dbReference>
<dbReference type="GO" id="GO:0030687">
    <property type="term" value="C:preribosome, large subunit precursor"/>
    <property type="evidence" value="ECO:0007005"/>
    <property type="project" value="SGD"/>
</dbReference>
<dbReference type="InterPro" id="IPR019434">
    <property type="entry name" value="DUF2423"/>
</dbReference>
<dbReference type="PANTHER" id="PTHR28219">
    <property type="entry name" value="UPF0642 PROTEIN YBL028C"/>
    <property type="match status" value="1"/>
</dbReference>
<dbReference type="PANTHER" id="PTHR28219:SF1">
    <property type="entry name" value="UPF0642 PROTEIN YBL028C"/>
    <property type="match status" value="1"/>
</dbReference>
<dbReference type="Pfam" id="PF10338">
    <property type="entry name" value="YBL028C_N"/>
    <property type="match status" value="1"/>
</dbReference>
<reference key="1">
    <citation type="journal article" date="1994" name="Yeast">
        <title>Analysis of a 17.4 kb DNA segment of yeast chromosome II encompassing the ribosomal protein L19 as well as proteins with homologies to components of the hnRNP and snRNP complexes and to the human proliferation-associated p120 antigen.</title>
        <authorList>
            <person name="van Dyck L."/>
            <person name="Jonniaux J.-L."/>
            <person name="Barreiros T.D.M."/>
            <person name="Kleine K."/>
            <person name="Goffeau A."/>
        </authorList>
    </citation>
    <scope>NUCLEOTIDE SEQUENCE [GENOMIC DNA]</scope>
    <source>
        <strain>ATCC 204508 / S288c</strain>
    </source>
</reference>
<reference key="2">
    <citation type="journal article" date="1994" name="EMBO J.">
        <title>Complete DNA sequence of yeast chromosome II.</title>
        <authorList>
            <person name="Feldmann H."/>
            <person name="Aigle M."/>
            <person name="Aljinovic G."/>
            <person name="Andre B."/>
            <person name="Baclet M.C."/>
            <person name="Barthe C."/>
            <person name="Baur A."/>
            <person name="Becam A.-M."/>
            <person name="Biteau N."/>
            <person name="Boles E."/>
            <person name="Brandt T."/>
            <person name="Brendel M."/>
            <person name="Brueckner M."/>
            <person name="Bussereau F."/>
            <person name="Christiansen C."/>
            <person name="Contreras R."/>
            <person name="Crouzet M."/>
            <person name="Cziepluch C."/>
            <person name="Demolis N."/>
            <person name="Delaveau T."/>
            <person name="Doignon F."/>
            <person name="Domdey H."/>
            <person name="Duesterhus S."/>
            <person name="Dubois E."/>
            <person name="Dujon B."/>
            <person name="El Bakkoury M."/>
            <person name="Entian K.-D."/>
            <person name="Feuermann M."/>
            <person name="Fiers W."/>
            <person name="Fobo G.M."/>
            <person name="Fritz C."/>
            <person name="Gassenhuber J."/>
            <person name="Glansdorff N."/>
            <person name="Goffeau A."/>
            <person name="Grivell L.A."/>
            <person name="de Haan M."/>
            <person name="Hein C."/>
            <person name="Herbert C.J."/>
            <person name="Hollenberg C.P."/>
            <person name="Holmstroem K."/>
            <person name="Jacq C."/>
            <person name="Jacquet M."/>
            <person name="Jauniaux J.-C."/>
            <person name="Jonniaux J.-L."/>
            <person name="Kallesoee T."/>
            <person name="Kiesau P."/>
            <person name="Kirchrath L."/>
            <person name="Koetter P."/>
            <person name="Korol S."/>
            <person name="Liebl S."/>
            <person name="Logghe M."/>
            <person name="Lohan A.J.E."/>
            <person name="Louis E.J."/>
            <person name="Li Z.Y."/>
            <person name="Maat M.J."/>
            <person name="Mallet L."/>
            <person name="Mannhaupt G."/>
            <person name="Messenguy F."/>
            <person name="Miosga T."/>
            <person name="Molemans F."/>
            <person name="Mueller S."/>
            <person name="Nasr F."/>
            <person name="Obermaier B."/>
            <person name="Perea J."/>
            <person name="Pierard A."/>
            <person name="Piravandi E."/>
            <person name="Pohl F.M."/>
            <person name="Pohl T.M."/>
            <person name="Potier S."/>
            <person name="Proft M."/>
            <person name="Purnelle B."/>
            <person name="Ramezani Rad M."/>
            <person name="Rieger M."/>
            <person name="Rose M."/>
            <person name="Schaaff-Gerstenschlaeger I."/>
            <person name="Scherens B."/>
            <person name="Schwarzlose C."/>
            <person name="Skala J."/>
            <person name="Slonimski P.P."/>
            <person name="Smits P.H.M."/>
            <person name="Souciet J.-L."/>
            <person name="Steensma H.Y."/>
            <person name="Stucka R."/>
            <person name="Urrestarazu L.A."/>
            <person name="van der Aart Q.J.M."/>
            <person name="Van Dyck L."/>
            <person name="Vassarotti A."/>
            <person name="Vetter I."/>
            <person name="Vierendeels F."/>
            <person name="Vissers S."/>
            <person name="Wagner G."/>
            <person name="de Wergifosse P."/>
            <person name="Wolfe K.H."/>
            <person name="Zagulski M."/>
            <person name="Zimmermann F.K."/>
            <person name="Mewes H.-W."/>
            <person name="Kleine K."/>
        </authorList>
    </citation>
    <scope>NUCLEOTIDE SEQUENCE [LARGE SCALE GENOMIC DNA]</scope>
    <source>
        <strain>ATCC 204508 / S288c</strain>
    </source>
</reference>
<reference key="3">
    <citation type="journal article" date="2014" name="G3 (Bethesda)">
        <title>The reference genome sequence of Saccharomyces cerevisiae: Then and now.</title>
        <authorList>
            <person name="Engel S.R."/>
            <person name="Dietrich F.S."/>
            <person name="Fisk D.G."/>
            <person name="Binkley G."/>
            <person name="Balakrishnan R."/>
            <person name="Costanzo M.C."/>
            <person name="Dwight S.S."/>
            <person name="Hitz B.C."/>
            <person name="Karra K."/>
            <person name="Nash R.S."/>
            <person name="Weng S."/>
            <person name="Wong E.D."/>
            <person name="Lloyd P."/>
            <person name="Skrzypek M.S."/>
            <person name="Miyasato S.R."/>
            <person name="Simison M."/>
            <person name="Cherry J.M."/>
        </authorList>
    </citation>
    <scope>GENOME REANNOTATION</scope>
    <source>
        <strain>ATCC 204508 / S288c</strain>
    </source>
</reference>
<reference key="4">
    <citation type="journal article" date="2007" name="Genome Res.">
        <title>Approaching a complete repository of sequence-verified protein-encoding clones for Saccharomyces cerevisiae.</title>
        <authorList>
            <person name="Hu Y."/>
            <person name="Rolfs A."/>
            <person name="Bhullar B."/>
            <person name="Murthy T.V.S."/>
            <person name="Zhu C."/>
            <person name="Berger M.F."/>
            <person name="Camargo A.A."/>
            <person name="Kelley F."/>
            <person name="McCarron S."/>
            <person name="Jepson D."/>
            <person name="Richardson A."/>
            <person name="Raphael J."/>
            <person name="Moreira D."/>
            <person name="Taycher E."/>
            <person name="Zuo D."/>
            <person name="Mohr S."/>
            <person name="Kane M.F."/>
            <person name="Williamson J."/>
            <person name="Simpson A.J.G."/>
            <person name="Bulyk M.L."/>
            <person name="Harlow E."/>
            <person name="Marsischky G."/>
            <person name="Kolodner R.D."/>
            <person name="LaBaer J."/>
        </authorList>
    </citation>
    <scope>NUCLEOTIDE SEQUENCE [GENOMIC DNA]</scope>
    <source>
        <strain>ATCC 204508 / S288c</strain>
    </source>
</reference>
<reference key="5">
    <citation type="journal article" date="2003" name="Nature">
        <title>Global analysis of protein expression in yeast.</title>
        <authorList>
            <person name="Ghaemmaghami S."/>
            <person name="Huh W.-K."/>
            <person name="Bower K."/>
            <person name="Howson R.W."/>
            <person name="Belle A."/>
            <person name="Dephoure N."/>
            <person name="O'Shea E.K."/>
            <person name="Weissman J.S."/>
        </authorList>
    </citation>
    <scope>LEVEL OF PROTEIN EXPRESSION [LARGE SCALE ANALYSIS]</scope>
</reference>